<feature type="chain" id="PRO_0000122003" description="Serine--tRNA ligase">
    <location>
        <begin position="1"/>
        <end position="425"/>
    </location>
</feature>
<feature type="binding site" evidence="1">
    <location>
        <begin position="231"/>
        <end position="233"/>
    </location>
    <ligand>
        <name>L-serine</name>
        <dbReference type="ChEBI" id="CHEBI:33384"/>
    </ligand>
</feature>
<feature type="binding site" evidence="1">
    <location>
        <begin position="262"/>
        <end position="264"/>
    </location>
    <ligand>
        <name>ATP</name>
        <dbReference type="ChEBI" id="CHEBI:30616"/>
    </ligand>
</feature>
<feature type="binding site" evidence="1">
    <location>
        <position position="285"/>
    </location>
    <ligand>
        <name>L-serine</name>
        <dbReference type="ChEBI" id="CHEBI:33384"/>
    </ligand>
</feature>
<feature type="binding site" evidence="1">
    <location>
        <begin position="349"/>
        <end position="352"/>
    </location>
    <ligand>
        <name>ATP</name>
        <dbReference type="ChEBI" id="CHEBI:30616"/>
    </ligand>
</feature>
<feature type="binding site" evidence="1">
    <location>
        <position position="385"/>
    </location>
    <ligand>
        <name>L-serine</name>
        <dbReference type="ChEBI" id="CHEBI:33384"/>
    </ligand>
</feature>
<gene>
    <name evidence="1" type="primary">serS</name>
    <name type="ordered locus">BLi00018</name>
    <name type="ordered locus">BL02355</name>
</gene>
<name>SYS_BACLD</name>
<keyword id="KW-0030">Aminoacyl-tRNA synthetase</keyword>
<keyword id="KW-0067">ATP-binding</keyword>
<keyword id="KW-0963">Cytoplasm</keyword>
<keyword id="KW-0436">Ligase</keyword>
<keyword id="KW-0547">Nucleotide-binding</keyword>
<keyword id="KW-0648">Protein biosynthesis</keyword>
<keyword id="KW-1185">Reference proteome</keyword>
<reference key="1">
    <citation type="journal article" date="2004" name="J. Mol. Microbiol. Biotechnol.">
        <title>The complete genome sequence of Bacillus licheniformis DSM13, an organism with great industrial potential.</title>
        <authorList>
            <person name="Veith B."/>
            <person name="Herzberg C."/>
            <person name="Steckel S."/>
            <person name="Feesche J."/>
            <person name="Maurer K.H."/>
            <person name="Ehrenreich P."/>
            <person name="Baeumer S."/>
            <person name="Henne A."/>
            <person name="Liesegang H."/>
            <person name="Merkl R."/>
            <person name="Ehrenreich A."/>
            <person name="Gottschalk G."/>
        </authorList>
    </citation>
    <scope>NUCLEOTIDE SEQUENCE [LARGE SCALE GENOMIC DNA]</scope>
    <source>
        <strain>ATCC 14580 / DSM 13 / JCM 2505 / CCUG 7422 / NBRC 12200 / NCIMB 9375 / NCTC 10341 / NRRL NRS-1264 / Gibson 46</strain>
    </source>
</reference>
<reference key="2">
    <citation type="journal article" date="2004" name="Genome Biol.">
        <title>Complete genome sequence of the industrial bacterium Bacillus licheniformis and comparisons with closely related Bacillus species.</title>
        <authorList>
            <person name="Rey M.W."/>
            <person name="Ramaiya P."/>
            <person name="Nelson B.A."/>
            <person name="Brody-Karpin S.D."/>
            <person name="Zaretsky E.J."/>
            <person name="Tang M."/>
            <person name="Lopez de Leon A."/>
            <person name="Xiang H."/>
            <person name="Gusti V."/>
            <person name="Clausen I.G."/>
            <person name="Olsen P.B."/>
            <person name="Rasmussen M.D."/>
            <person name="Andersen J.T."/>
            <person name="Joergensen P.L."/>
            <person name="Larsen T.S."/>
            <person name="Sorokin A."/>
            <person name="Bolotin A."/>
            <person name="Lapidus A."/>
            <person name="Galleron N."/>
            <person name="Ehrlich S.D."/>
            <person name="Berka R.M."/>
        </authorList>
    </citation>
    <scope>NUCLEOTIDE SEQUENCE [LARGE SCALE GENOMIC DNA]</scope>
    <source>
        <strain>ATCC 14580 / DSM 13 / JCM 2505 / CCUG 7422 / NBRC 12200 / NCIMB 9375 / NCTC 10341 / NRRL NRS-1264 / Gibson 46</strain>
    </source>
</reference>
<organism>
    <name type="scientific">Bacillus licheniformis (strain ATCC 14580 / DSM 13 / JCM 2505 / CCUG 7422 / NBRC 12200 / NCIMB 9375 / NCTC 10341 / NRRL NRS-1264 / Gibson 46)</name>
    <dbReference type="NCBI Taxonomy" id="279010"/>
    <lineage>
        <taxon>Bacteria</taxon>
        <taxon>Bacillati</taxon>
        <taxon>Bacillota</taxon>
        <taxon>Bacilli</taxon>
        <taxon>Bacillales</taxon>
        <taxon>Bacillaceae</taxon>
        <taxon>Bacillus</taxon>
    </lineage>
</organism>
<dbReference type="EC" id="6.1.1.11" evidence="1"/>
<dbReference type="EMBL" id="AE017333">
    <property type="protein sequence ID" value="AAU39004.1"/>
    <property type="molecule type" value="Genomic_DNA"/>
</dbReference>
<dbReference type="EMBL" id="CP000002">
    <property type="protein sequence ID" value="AAU21657.1"/>
    <property type="molecule type" value="Genomic_DNA"/>
</dbReference>
<dbReference type="RefSeq" id="WP_003178111.1">
    <property type="nucleotide sequence ID" value="NC_006322.1"/>
</dbReference>
<dbReference type="SMR" id="Q65PL0"/>
<dbReference type="STRING" id="279010.BL02355"/>
<dbReference type="GeneID" id="92859033"/>
<dbReference type="KEGG" id="bld:BLi00018"/>
<dbReference type="KEGG" id="bli:BL02355"/>
<dbReference type="eggNOG" id="COG0172">
    <property type="taxonomic scope" value="Bacteria"/>
</dbReference>
<dbReference type="HOGENOM" id="CLU_023797_1_1_9"/>
<dbReference type="UniPathway" id="UPA00906">
    <property type="reaction ID" value="UER00895"/>
</dbReference>
<dbReference type="Proteomes" id="UP000000606">
    <property type="component" value="Chromosome"/>
</dbReference>
<dbReference type="GO" id="GO:0005737">
    <property type="term" value="C:cytoplasm"/>
    <property type="evidence" value="ECO:0007669"/>
    <property type="project" value="UniProtKB-SubCell"/>
</dbReference>
<dbReference type="GO" id="GO:0005524">
    <property type="term" value="F:ATP binding"/>
    <property type="evidence" value="ECO:0007669"/>
    <property type="project" value="UniProtKB-UniRule"/>
</dbReference>
<dbReference type="GO" id="GO:0140096">
    <property type="term" value="F:catalytic activity, acting on a protein"/>
    <property type="evidence" value="ECO:0007669"/>
    <property type="project" value="UniProtKB-ARBA"/>
</dbReference>
<dbReference type="GO" id="GO:0004828">
    <property type="term" value="F:serine-tRNA ligase activity"/>
    <property type="evidence" value="ECO:0007669"/>
    <property type="project" value="UniProtKB-UniRule"/>
</dbReference>
<dbReference type="GO" id="GO:0016740">
    <property type="term" value="F:transferase activity"/>
    <property type="evidence" value="ECO:0007669"/>
    <property type="project" value="UniProtKB-ARBA"/>
</dbReference>
<dbReference type="GO" id="GO:0016260">
    <property type="term" value="P:selenocysteine biosynthetic process"/>
    <property type="evidence" value="ECO:0007669"/>
    <property type="project" value="UniProtKB-UniRule"/>
</dbReference>
<dbReference type="GO" id="GO:0006434">
    <property type="term" value="P:seryl-tRNA aminoacylation"/>
    <property type="evidence" value="ECO:0007669"/>
    <property type="project" value="UniProtKB-UniRule"/>
</dbReference>
<dbReference type="CDD" id="cd00770">
    <property type="entry name" value="SerRS_core"/>
    <property type="match status" value="1"/>
</dbReference>
<dbReference type="Gene3D" id="3.30.930.10">
    <property type="entry name" value="Bira Bifunctional Protein, Domain 2"/>
    <property type="match status" value="1"/>
</dbReference>
<dbReference type="Gene3D" id="1.10.287.40">
    <property type="entry name" value="Serine-tRNA synthetase, tRNA binding domain"/>
    <property type="match status" value="1"/>
</dbReference>
<dbReference type="HAMAP" id="MF_00176">
    <property type="entry name" value="Ser_tRNA_synth_type1"/>
    <property type="match status" value="1"/>
</dbReference>
<dbReference type="InterPro" id="IPR002314">
    <property type="entry name" value="aa-tRNA-synt_IIb"/>
</dbReference>
<dbReference type="InterPro" id="IPR006195">
    <property type="entry name" value="aa-tRNA-synth_II"/>
</dbReference>
<dbReference type="InterPro" id="IPR045864">
    <property type="entry name" value="aa-tRNA-synth_II/BPL/LPL"/>
</dbReference>
<dbReference type="InterPro" id="IPR002317">
    <property type="entry name" value="Ser-tRNA-ligase_type_1"/>
</dbReference>
<dbReference type="InterPro" id="IPR015866">
    <property type="entry name" value="Ser-tRNA-synth_1_N"/>
</dbReference>
<dbReference type="InterPro" id="IPR042103">
    <property type="entry name" value="SerRS_1_N_sf"/>
</dbReference>
<dbReference type="InterPro" id="IPR033729">
    <property type="entry name" value="SerRS_core"/>
</dbReference>
<dbReference type="InterPro" id="IPR010978">
    <property type="entry name" value="tRNA-bd_arm"/>
</dbReference>
<dbReference type="NCBIfam" id="TIGR00414">
    <property type="entry name" value="serS"/>
    <property type="match status" value="1"/>
</dbReference>
<dbReference type="PANTHER" id="PTHR43697:SF1">
    <property type="entry name" value="SERINE--TRNA LIGASE"/>
    <property type="match status" value="1"/>
</dbReference>
<dbReference type="PANTHER" id="PTHR43697">
    <property type="entry name" value="SERYL-TRNA SYNTHETASE"/>
    <property type="match status" value="1"/>
</dbReference>
<dbReference type="Pfam" id="PF02403">
    <property type="entry name" value="Seryl_tRNA_N"/>
    <property type="match status" value="1"/>
</dbReference>
<dbReference type="Pfam" id="PF00587">
    <property type="entry name" value="tRNA-synt_2b"/>
    <property type="match status" value="1"/>
</dbReference>
<dbReference type="PIRSF" id="PIRSF001529">
    <property type="entry name" value="Ser-tRNA-synth_IIa"/>
    <property type="match status" value="1"/>
</dbReference>
<dbReference type="PRINTS" id="PR00981">
    <property type="entry name" value="TRNASYNTHSER"/>
</dbReference>
<dbReference type="SUPFAM" id="SSF55681">
    <property type="entry name" value="Class II aaRS and biotin synthetases"/>
    <property type="match status" value="1"/>
</dbReference>
<dbReference type="SUPFAM" id="SSF46589">
    <property type="entry name" value="tRNA-binding arm"/>
    <property type="match status" value="1"/>
</dbReference>
<dbReference type="PROSITE" id="PS50862">
    <property type="entry name" value="AA_TRNA_LIGASE_II"/>
    <property type="match status" value="1"/>
</dbReference>
<accession>Q65PL0</accession>
<accession>Q630A1</accession>
<comment type="function">
    <text evidence="1">Catalyzes the attachment of serine to tRNA(Ser). Is also able to aminoacylate tRNA(Sec) with serine, to form the misacylated tRNA L-seryl-tRNA(Sec), which will be further converted into selenocysteinyl-tRNA(Sec).</text>
</comment>
<comment type="catalytic activity">
    <reaction evidence="1">
        <text>tRNA(Ser) + L-serine + ATP = L-seryl-tRNA(Ser) + AMP + diphosphate + H(+)</text>
        <dbReference type="Rhea" id="RHEA:12292"/>
        <dbReference type="Rhea" id="RHEA-COMP:9669"/>
        <dbReference type="Rhea" id="RHEA-COMP:9703"/>
        <dbReference type="ChEBI" id="CHEBI:15378"/>
        <dbReference type="ChEBI" id="CHEBI:30616"/>
        <dbReference type="ChEBI" id="CHEBI:33019"/>
        <dbReference type="ChEBI" id="CHEBI:33384"/>
        <dbReference type="ChEBI" id="CHEBI:78442"/>
        <dbReference type="ChEBI" id="CHEBI:78533"/>
        <dbReference type="ChEBI" id="CHEBI:456215"/>
        <dbReference type="EC" id="6.1.1.11"/>
    </reaction>
</comment>
<comment type="catalytic activity">
    <reaction evidence="1">
        <text>tRNA(Sec) + L-serine + ATP = L-seryl-tRNA(Sec) + AMP + diphosphate + H(+)</text>
        <dbReference type="Rhea" id="RHEA:42580"/>
        <dbReference type="Rhea" id="RHEA-COMP:9742"/>
        <dbReference type="Rhea" id="RHEA-COMP:10128"/>
        <dbReference type="ChEBI" id="CHEBI:15378"/>
        <dbReference type="ChEBI" id="CHEBI:30616"/>
        <dbReference type="ChEBI" id="CHEBI:33019"/>
        <dbReference type="ChEBI" id="CHEBI:33384"/>
        <dbReference type="ChEBI" id="CHEBI:78442"/>
        <dbReference type="ChEBI" id="CHEBI:78533"/>
        <dbReference type="ChEBI" id="CHEBI:456215"/>
        <dbReference type="EC" id="6.1.1.11"/>
    </reaction>
</comment>
<comment type="pathway">
    <text evidence="1">Aminoacyl-tRNA biosynthesis; selenocysteinyl-tRNA(Sec) biosynthesis; L-seryl-tRNA(Sec) from L-serine and tRNA(Sec): step 1/1.</text>
</comment>
<comment type="subunit">
    <text evidence="1">Homodimer. The tRNA molecule binds across the dimer.</text>
</comment>
<comment type="subcellular location">
    <subcellularLocation>
        <location evidence="1">Cytoplasm</location>
    </subcellularLocation>
</comment>
<comment type="domain">
    <text evidence="1">Consists of two distinct domains, a catalytic core and a N-terminal extension that is involved in tRNA binding.</text>
</comment>
<comment type="similarity">
    <text evidence="1">Belongs to the class-II aminoacyl-tRNA synthetase family. Type-1 seryl-tRNA synthetase subfamily.</text>
</comment>
<protein>
    <recommendedName>
        <fullName evidence="1">Serine--tRNA ligase</fullName>
        <ecNumber evidence="1">6.1.1.11</ecNumber>
    </recommendedName>
    <alternativeName>
        <fullName evidence="1">Seryl-tRNA synthetase</fullName>
        <shortName evidence="1">SerRS</shortName>
    </alternativeName>
    <alternativeName>
        <fullName evidence="1">Seryl-tRNA(Ser/Sec) synthetase</fullName>
    </alternativeName>
</protein>
<sequence length="425" mass="48876">MLDVKLLRANFEEIKQKLAHRGEDLSDFDQFEELDTKRRELIVKVEELKGKRNEVSQQVAALKREKKDADHLIKEMREVGEDIKKLDEELRTVESSLDKIMLSIPNIPHESVPVGETEDDNVEVRKWGELPEFSFEPKPHWDIADQLDILDFERAGKVTGSRFVFYKGLGARLERALYNFMLDLHVDEYGYTEVIPPYMVNRASMTGTGQLPKFEEDAFKIREEDYFLIPTAEVPITNLHRDEILSADELPINYAAFSACFRSEAGSAGRDTRGLIRQHQFNKVELVKFVKPEDSYEELEKLTNQAEKVLQLLELPYRVMSMCTGDLGFTAAKKYDIEVWIPSQNTYREISSCSNFEAFQARRANIRFRREAKGKPEHVHTLNGSGLAVGRTVAALLENYQQEDGSVIIPKALRPYMGNRDVIQP</sequence>
<evidence type="ECO:0000255" key="1">
    <source>
        <dbReference type="HAMAP-Rule" id="MF_00176"/>
    </source>
</evidence>
<proteinExistence type="inferred from homology"/>